<proteinExistence type="inferred from homology"/>
<dbReference type="EMBL" id="CP000872">
    <property type="protein sequence ID" value="ABX62885.1"/>
    <property type="molecule type" value="Genomic_DNA"/>
</dbReference>
<dbReference type="RefSeq" id="WP_004692834.1">
    <property type="nucleotide sequence ID" value="NC_010103.1"/>
</dbReference>
<dbReference type="SMR" id="A9M887"/>
<dbReference type="GeneID" id="55591444"/>
<dbReference type="KEGG" id="bcs:BCAN_A1888"/>
<dbReference type="HOGENOM" id="CLU_061463_1_1_5"/>
<dbReference type="PhylomeDB" id="A9M887"/>
<dbReference type="Proteomes" id="UP000001385">
    <property type="component" value="Chromosome I"/>
</dbReference>
<dbReference type="GO" id="GO:0005737">
    <property type="term" value="C:cytoplasm"/>
    <property type="evidence" value="ECO:0007669"/>
    <property type="project" value="UniProtKB-ARBA"/>
</dbReference>
<dbReference type="GO" id="GO:1990904">
    <property type="term" value="C:ribonucleoprotein complex"/>
    <property type="evidence" value="ECO:0007669"/>
    <property type="project" value="UniProtKB-KW"/>
</dbReference>
<dbReference type="GO" id="GO:0005840">
    <property type="term" value="C:ribosome"/>
    <property type="evidence" value="ECO:0007669"/>
    <property type="project" value="UniProtKB-KW"/>
</dbReference>
<dbReference type="GO" id="GO:0019843">
    <property type="term" value="F:rRNA binding"/>
    <property type="evidence" value="ECO:0007669"/>
    <property type="project" value="UniProtKB-UniRule"/>
</dbReference>
<dbReference type="GO" id="GO:0003735">
    <property type="term" value="F:structural constituent of ribosome"/>
    <property type="evidence" value="ECO:0007669"/>
    <property type="project" value="InterPro"/>
</dbReference>
<dbReference type="GO" id="GO:0006412">
    <property type="term" value="P:translation"/>
    <property type="evidence" value="ECO:0007669"/>
    <property type="project" value="UniProtKB-UniRule"/>
</dbReference>
<dbReference type="HAMAP" id="MF_01363">
    <property type="entry name" value="Ribosomal_bL21"/>
    <property type="match status" value="1"/>
</dbReference>
<dbReference type="InterPro" id="IPR028909">
    <property type="entry name" value="bL21-like"/>
</dbReference>
<dbReference type="InterPro" id="IPR036164">
    <property type="entry name" value="bL21-like_sf"/>
</dbReference>
<dbReference type="InterPro" id="IPR001787">
    <property type="entry name" value="Ribosomal_bL21"/>
</dbReference>
<dbReference type="NCBIfam" id="TIGR00061">
    <property type="entry name" value="L21"/>
    <property type="match status" value="1"/>
</dbReference>
<dbReference type="PANTHER" id="PTHR21349">
    <property type="entry name" value="50S RIBOSOMAL PROTEIN L21"/>
    <property type="match status" value="1"/>
</dbReference>
<dbReference type="PANTHER" id="PTHR21349:SF0">
    <property type="entry name" value="LARGE RIBOSOMAL SUBUNIT PROTEIN BL21M"/>
    <property type="match status" value="1"/>
</dbReference>
<dbReference type="Pfam" id="PF00829">
    <property type="entry name" value="Ribosomal_L21p"/>
    <property type="match status" value="1"/>
</dbReference>
<dbReference type="SUPFAM" id="SSF141091">
    <property type="entry name" value="L21p-like"/>
    <property type="match status" value="1"/>
</dbReference>
<evidence type="ECO:0000255" key="1">
    <source>
        <dbReference type="HAMAP-Rule" id="MF_01363"/>
    </source>
</evidence>
<evidence type="ECO:0000256" key="2">
    <source>
        <dbReference type="SAM" id="MobiDB-lite"/>
    </source>
</evidence>
<evidence type="ECO:0000305" key="3"/>
<gene>
    <name evidence="1" type="primary">rplU</name>
    <name type="ordered locus">BCAN_A1888</name>
</gene>
<organism>
    <name type="scientific">Brucella canis (strain ATCC 23365 / NCTC 10854 / RM-666)</name>
    <dbReference type="NCBI Taxonomy" id="483179"/>
    <lineage>
        <taxon>Bacteria</taxon>
        <taxon>Pseudomonadati</taxon>
        <taxon>Pseudomonadota</taxon>
        <taxon>Alphaproteobacteria</taxon>
        <taxon>Hyphomicrobiales</taxon>
        <taxon>Brucellaceae</taxon>
        <taxon>Brucella/Ochrobactrum group</taxon>
        <taxon>Brucella</taxon>
    </lineage>
</organism>
<reference key="1">
    <citation type="submission" date="2007-10" db="EMBL/GenBank/DDBJ databases">
        <title>Brucella canis ATCC 23365 whole genome shotgun sequencing project.</title>
        <authorList>
            <person name="Setubal J.C."/>
            <person name="Bowns C."/>
            <person name="Boyle S."/>
            <person name="Crasta O.R."/>
            <person name="Czar M.J."/>
            <person name="Dharmanolla C."/>
            <person name="Gillespie J.J."/>
            <person name="Kenyon R.W."/>
            <person name="Lu J."/>
            <person name="Mane S."/>
            <person name="Mohapatra S."/>
            <person name="Nagrani S."/>
            <person name="Purkayastha A."/>
            <person name="Rajasimha H.K."/>
            <person name="Shallom J.M."/>
            <person name="Shallom S."/>
            <person name="Shukla M."/>
            <person name="Snyder E.E."/>
            <person name="Sobral B.W."/>
            <person name="Wattam A.R."/>
            <person name="Will R."/>
            <person name="Williams K."/>
            <person name="Yoo H."/>
            <person name="Bruce D."/>
            <person name="Detter C."/>
            <person name="Munk C."/>
            <person name="Brettin T.S."/>
        </authorList>
    </citation>
    <scope>NUCLEOTIDE SEQUENCE [LARGE SCALE GENOMIC DNA]</scope>
    <source>
        <strain>ATCC 23365 / NCTC 10854 / RM-666</strain>
    </source>
</reference>
<comment type="function">
    <text evidence="1">This protein binds to 23S rRNA in the presence of protein L20.</text>
</comment>
<comment type="subunit">
    <text evidence="1">Part of the 50S ribosomal subunit. Contacts protein L20.</text>
</comment>
<comment type="similarity">
    <text evidence="1">Belongs to the bacterial ribosomal protein bL21 family.</text>
</comment>
<sequence>MFAVIKTGGKQYRVAANDLIKVEKVAGEAGDIVEFAEVLMVGSTIGAPTVAGALVTAEVVEQSRGRKVIAFKKRRRQNSKRTRGHRQELTTIRISEILTDGAKPSKKAAEKKAPKADAAEGEAAKPKKAAPKKAAAKAESAE</sequence>
<protein>
    <recommendedName>
        <fullName evidence="1">Large ribosomal subunit protein bL21</fullName>
    </recommendedName>
    <alternativeName>
        <fullName evidence="3">50S ribosomal protein L21</fullName>
    </alternativeName>
</protein>
<name>RL21_BRUC2</name>
<accession>A9M887</accession>
<keyword id="KW-1185">Reference proteome</keyword>
<keyword id="KW-0687">Ribonucleoprotein</keyword>
<keyword id="KW-0689">Ribosomal protein</keyword>
<keyword id="KW-0694">RNA-binding</keyword>
<keyword id="KW-0699">rRNA-binding</keyword>
<feature type="chain" id="PRO_1000086970" description="Large ribosomal subunit protein bL21">
    <location>
        <begin position="1"/>
        <end position="142"/>
    </location>
</feature>
<feature type="region of interest" description="Disordered" evidence="2">
    <location>
        <begin position="73"/>
        <end position="142"/>
    </location>
</feature>
<feature type="compositionally biased region" description="Basic residues" evidence="2">
    <location>
        <begin position="73"/>
        <end position="84"/>
    </location>
</feature>
<feature type="compositionally biased region" description="Basic and acidic residues" evidence="2">
    <location>
        <begin position="107"/>
        <end position="125"/>
    </location>
</feature>
<feature type="compositionally biased region" description="Basic residues" evidence="2">
    <location>
        <begin position="126"/>
        <end position="135"/>
    </location>
</feature>